<dbReference type="EC" id="3.6.4.-"/>
<dbReference type="EMBL" id="AY484669">
    <property type="protein sequence ID" value="AAS49840.1"/>
    <property type="molecule type" value="Genomic_DNA"/>
</dbReference>
<dbReference type="Proteomes" id="UP000166173">
    <property type="component" value="Segment"/>
</dbReference>
<dbReference type="GO" id="GO:0044423">
    <property type="term" value="C:virion component"/>
    <property type="evidence" value="ECO:0007669"/>
    <property type="project" value="UniProtKB-KW"/>
</dbReference>
<dbReference type="GO" id="GO:0005524">
    <property type="term" value="F:ATP binding"/>
    <property type="evidence" value="ECO:0007669"/>
    <property type="project" value="UniProtKB-KW"/>
</dbReference>
<dbReference type="GO" id="GO:0003677">
    <property type="term" value="F:DNA binding"/>
    <property type="evidence" value="ECO:0007669"/>
    <property type="project" value="UniProtKB-KW"/>
</dbReference>
<dbReference type="GO" id="GO:0004386">
    <property type="term" value="F:helicase activity"/>
    <property type="evidence" value="ECO:0007669"/>
    <property type="project" value="UniProtKB-KW"/>
</dbReference>
<dbReference type="GO" id="GO:0016787">
    <property type="term" value="F:hydrolase activity"/>
    <property type="evidence" value="ECO:0007669"/>
    <property type="project" value="UniProtKB-KW"/>
</dbReference>
<dbReference type="CDD" id="cd18785">
    <property type="entry name" value="SF2_C"/>
    <property type="match status" value="1"/>
</dbReference>
<dbReference type="Gene3D" id="3.40.50.300">
    <property type="entry name" value="P-loop containing nucleotide triphosphate hydrolases"/>
    <property type="match status" value="2"/>
</dbReference>
<dbReference type="InterPro" id="IPR006935">
    <property type="entry name" value="Helicase/UvrB_N"/>
</dbReference>
<dbReference type="InterPro" id="IPR014001">
    <property type="entry name" value="Helicase_ATP-bd"/>
</dbReference>
<dbReference type="InterPro" id="IPR050742">
    <property type="entry name" value="Helicase_Restrict-Modif_Enz"/>
</dbReference>
<dbReference type="InterPro" id="IPR027417">
    <property type="entry name" value="P-loop_NTPase"/>
</dbReference>
<dbReference type="PANTHER" id="PTHR47396:SF1">
    <property type="entry name" value="ATP-DEPENDENT HELICASE IRC3-RELATED"/>
    <property type="match status" value="1"/>
</dbReference>
<dbReference type="PANTHER" id="PTHR47396">
    <property type="entry name" value="TYPE I RESTRICTION ENZYME ECOKI R PROTEIN"/>
    <property type="match status" value="1"/>
</dbReference>
<dbReference type="Pfam" id="PF04851">
    <property type="entry name" value="ResIII"/>
    <property type="match status" value="1"/>
</dbReference>
<dbReference type="SMART" id="SM00487">
    <property type="entry name" value="DEXDc"/>
    <property type="match status" value="1"/>
</dbReference>
<dbReference type="SUPFAM" id="SSF52540">
    <property type="entry name" value="P-loop containing nucleoside triphosphate hydrolases"/>
    <property type="match status" value="1"/>
</dbReference>
<dbReference type="PROSITE" id="PS51192">
    <property type="entry name" value="HELICASE_ATP_BIND_1"/>
    <property type="match status" value="1"/>
</dbReference>
<protein>
    <recommendedName>
        <fullName>Transcript termination protein A18</fullName>
        <ecNumber>3.6.4.-</ecNumber>
    </recommendedName>
</protein>
<proteinExistence type="inferred from homology"/>
<name>A18_RABPU</name>
<gene>
    <name type="ordered locus">RPXV127</name>
</gene>
<sequence length="493" mass="56716">MSLLKMEYNLYAELKKMTCGQPLSLFNEDGDFVEVEPGSSFKFLIPKGFYASPSVKTSLVFETLTTTDNKITSINPTNAPKLYPLQRKVVSEVVSNMRKMIESKRPLYITLHLACGFGKTITTCYLMATHGRKTVICVPNKMLIHQWKTQVEAVGLEHKISIDGVSSLLKELKTQSPDVLIVVSRHLTNDAFCKYINKHYDLFILDESHTYNLMNNTAVTRFLAYYPPMMCYFLTATPRPANRIYCNSIINIAKLSDLKKTIYAVDSFFEPYSTDNIRHMVKRLDGPSNKYHIYTEKLLSVDEPRNQLILNTLVEEFKSGTINRILVITKLREHMVLFYKRLLDLFGPEVVFIGDAQNRRTPDMVKSIKELNRFIFVSTLFYSGTGLDIPSLDSLFICSAVINNMQIEQLLGRVCRETELLDRTVYVFPNTSIKEIKYMIGNFMQRIISLSVDKLGFKQESYRKHQESDPTSVCTTSSREERVLNRIFNSQNR</sequence>
<accession>Q6RZG4</accession>
<feature type="chain" id="PRO_0000102187" description="Transcript termination protein A18">
    <location>
        <begin position="1"/>
        <end position="493"/>
    </location>
</feature>
<feature type="domain" description="Helicase ATP-binding" evidence="2">
    <location>
        <begin position="100"/>
        <end position="256"/>
    </location>
</feature>
<feature type="short sequence motif" description="DESH box">
    <location>
        <begin position="206"/>
        <end position="209"/>
    </location>
</feature>
<feature type="binding site" evidence="2">
    <location>
        <begin position="113"/>
        <end position="120"/>
    </location>
    <ligand>
        <name>ATP</name>
        <dbReference type="ChEBI" id="CHEBI:30616"/>
    </ligand>
</feature>
<reference key="1">
    <citation type="journal article" date="2005" name="J. Gen. Virol.">
        <title>Complete coding sequences of the rabbitpox virus genome.</title>
        <authorList>
            <person name="Li G."/>
            <person name="Chen N."/>
            <person name="Roper R.L."/>
            <person name="Feng Z."/>
            <person name="Hunter A.L."/>
            <person name="Danila M."/>
            <person name="Lefkowitz E.J."/>
            <person name="Buller R.M.L."/>
            <person name="Upton C."/>
        </authorList>
    </citation>
    <scope>NUCLEOTIDE SEQUENCE [LARGE SCALE GENOMIC DNA]</scope>
</reference>
<keyword id="KW-0067">ATP-binding</keyword>
<keyword id="KW-0238">DNA-binding</keyword>
<keyword id="KW-0347">Helicase</keyword>
<keyword id="KW-0378">Hydrolase</keyword>
<keyword id="KW-0426">Late protein</keyword>
<keyword id="KW-0547">Nucleotide-binding</keyword>
<keyword id="KW-0804">Transcription</keyword>
<keyword id="KW-0946">Virion</keyword>
<evidence type="ECO:0000250" key="1"/>
<evidence type="ECO:0000255" key="2">
    <source>
        <dbReference type="PROSITE-ProRule" id="PRU00541"/>
    </source>
</evidence>
<evidence type="ECO:0000305" key="3"/>
<comment type="function">
    <text evidence="1">DNA helicase which seems to act as a postreplicative transcription termination factor. Involved in ATP-dependent release of nascent RNA. Forms a stable complex with single-stranded DNA, and to a lesser extent RNA (By similarity).</text>
</comment>
<comment type="subunit">
    <text evidence="1">Interacts with G2. Might be part of a transcription complex composed at least of G2, A18, and H5.</text>
</comment>
<comment type="subcellular location">
    <subcellularLocation>
        <location evidence="1">Virion</location>
    </subcellularLocation>
    <text evidence="1">Localizes to the virion core.</text>
</comment>
<comment type="similarity">
    <text evidence="3">Belongs to the helicase family. Poxviruses subfamily.</text>
</comment>
<organism>
    <name type="scientific">Rabbitpox virus (strain Utrecht)</name>
    <name type="common">RPV</name>
    <dbReference type="NCBI Taxonomy" id="45417"/>
    <lineage>
        <taxon>Viruses</taxon>
        <taxon>Varidnaviria</taxon>
        <taxon>Bamfordvirae</taxon>
        <taxon>Nucleocytoviricota</taxon>
        <taxon>Pokkesviricetes</taxon>
        <taxon>Chitovirales</taxon>
        <taxon>Poxviridae</taxon>
        <taxon>Chordopoxvirinae</taxon>
        <taxon>Orthopoxvirus</taxon>
        <taxon>Vaccinia virus</taxon>
    </lineage>
</organism>
<organismHost>
    <name type="scientific">Oryctolagus cuniculus</name>
    <name type="common">Rabbit</name>
    <dbReference type="NCBI Taxonomy" id="9986"/>
</organismHost>